<sequence length="116" mass="12576">MFDKKAARLRRAKKTRAHIRFLGVHRLTVNRTPRHIYAQIISPNGGEVIAQASTLDSSLRSGATGNADAATSVGQMIAERAKAAGITKVAFDRSGFKYHGRVKALAEAARENGLEF</sequence>
<reference key="1">
    <citation type="submission" date="2006-03" db="EMBL/GenBank/DDBJ databases">
        <title>Complete sequence of chromosome of Psychrobacter cryohalolentis K5.</title>
        <authorList>
            <consortium name="US DOE Joint Genome Institute"/>
            <person name="Copeland A."/>
            <person name="Lucas S."/>
            <person name="Lapidus A."/>
            <person name="Barry K."/>
            <person name="Detter J.C."/>
            <person name="Glavina T."/>
            <person name="Hammon N."/>
            <person name="Israni S."/>
            <person name="Dalin E."/>
            <person name="Tice H."/>
            <person name="Pitluck S."/>
            <person name="Brettin T."/>
            <person name="Bruce D."/>
            <person name="Han C."/>
            <person name="Tapia R."/>
            <person name="Sims D.R."/>
            <person name="Gilna P."/>
            <person name="Schmutz J."/>
            <person name="Larimer F."/>
            <person name="Land M."/>
            <person name="Hauser L."/>
            <person name="Kyrpides N."/>
            <person name="Kim E."/>
            <person name="Richardson P."/>
        </authorList>
    </citation>
    <scope>NUCLEOTIDE SEQUENCE [LARGE SCALE GENOMIC DNA]</scope>
    <source>
        <strain>ATCC BAA-1226 / DSM 17306 / VKM B-2378 / K5</strain>
    </source>
</reference>
<accession>Q1QDH0</accession>
<protein>
    <recommendedName>
        <fullName evidence="1">Large ribosomal subunit protein uL18</fullName>
    </recommendedName>
    <alternativeName>
        <fullName evidence="2">50S ribosomal protein L18</fullName>
    </alternativeName>
</protein>
<name>RL18_PSYCK</name>
<gene>
    <name evidence="1" type="primary">rplR</name>
    <name type="ordered locus">Pcryo_0500</name>
</gene>
<keyword id="KW-0687">Ribonucleoprotein</keyword>
<keyword id="KW-0689">Ribosomal protein</keyword>
<keyword id="KW-0694">RNA-binding</keyword>
<keyword id="KW-0699">rRNA-binding</keyword>
<proteinExistence type="inferred from homology"/>
<dbReference type="EMBL" id="CP000323">
    <property type="protein sequence ID" value="ABE74283.1"/>
    <property type="molecule type" value="Genomic_DNA"/>
</dbReference>
<dbReference type="RefSeq" id="WP_011279801.1">
    <property type="nucleotide sequence ID" value="NC_007969.1"/>
</dbReference>
<dbReference type="SMR" id="Q1QDH0"/>
<dbReference type="STRING" id="335284.Pcryo_0500"/>
<dbReference type="KEGG" id="pcr:Pcryo_0500"/>
<dbReference type="eggNOG" id="COG0256">
    <property type="taxonomic scope" value="Bacteria"/>
</dbReference>
<dbReference type="HOGENOM" id="CLU_098841_0_1_6"/>
<dbReference type="Proteomes" id="UP000002425">
    <property type="component" value="Chromosome"/>
</dbReference>
<dbReference type="GO" id="GO:0022625">
    <property type="term" value="C:cytosolic large ribosomal subunit"/>
    <property type="evidence" value="ECO:0007669"/>
    <property type="project" value="TreeGrafter"/>
</dbReference>
<dbReference type="GO" id="GO:0008097">
    <property type="term" value="F:5S rRNA binding"/>
    <property type="evidence" value="ECO:0007669"/>
    <property type="project" value="TreeGrafter"/>
</dbReference>
<dbReference type="GO" id="GO:0003735">
    <property type="term" value="F:structural constituent of ribosome"/>
    <property type="evidence" value="ECO:0007669"/>
    <property type="project" value="InterPro"/>
</dbReference>
<dbReference type="GO" id="GO:0006412">
    <property type="term" value="P:translation"/>
    <property type="evidence" value="ECO:0007669"/>
    <property type="project" value="UniProtKB-UniRule"/>
</dbReference>
<dbReference type="CDD" id="cd00432">
    <property type="entry name" value="Ribosomal_L18_L5e"/>
    <property type="match status" value="1"/>
</dbReference>
<dbReference type="FunFam" id="3.30.420.100:FF:000001">
    <property type="entry name" value="50S ribosomal protein L18"/>
    <property type="match status" value="1"/>
</dbReference>
<dbReference type="Gene3D" id="3.30.420.100">
    <property type="match status" value="1"/>
</dbReference>
<dbReference type="HAMAP" id="MF_01337_B">
    <property type="entry name" value="Ribosomal_uL18_B"/>
    <property type="match status" value="1"/>
</dbReference>
<dbReference type="InterPro" id="IPR004389">
    <property type="entry name" value="Ribosomal_uL18_bac-type"/>
</dbReference>
<dbReference type="InterPro" id="IPR005484">
    <property type="entry name" value="Ribosomal_uL18_bac/euk"/>
</dbReference>
<dbReference type="NCBIfam" id="TIGR00060">
    <property type="entry name" value="L18_bact"/>
    <property type="match status" value="1"/>
</dbReference>
<dbReference type="PANTHER" id="PTHR12899">
    <property type="entry name" value="39S RIBOSOMAL PROTEIN L18, MITOCHONDRIAL"/>
    <property type="match status" value="1"/>
</dbReference>
<dbReference type="PANTHER" id="PTHR12899:SF3">
    <property type="entry name" value="LARGE RIBOSOMAL SUBUNIT PROTEIN UL18M"/>
    <property type="match status" value="1"/>
</dbReference>
<dbReference type="Pfam" id="PF00861">
    <property type="entry name" value="Ribosomal_L18p"/>
    <property type="match status" value="1"/>
</dbReference>
<dbReference type="SUPFAM" id="SSF53137">
    <property type="entry name" value="Translational machinery components"/>
    <property type="match status" value="1"/>
</dbReference>
<organism>
    <name type="scientific">Psychrobacter cryohalolentis (strain ATCC BAA-1226 / DSM 17306 / VKM B-2378 / K5)</name>
    <dbReference type="NCBI Taxonomy" id="335284"/>
    <lineage>
        <taxon>Bacteria</taxon>
        <taxon>Pseudomonadati</taxon>
        <taxon>Pseudomonadota</taxon>
        <taxon>Gammaproteobacteria</taxon>
        <taxon>Moraxellales</taxon>
        <taxon>Moraxellaceae</taxon>
        <taxon>Psychrobacter</taxon>
    </lineage>
</organism>
<comment type="function">
    <text evidence="1">This is one of the proteins that bind and probably mediate the attachment of the 5S RNA into the large ribosomal subunit, where it forms part of the central protuberance.</text>
</comment>
<comment type="subunit">
    <text evidence="1">Part of the 50S ribosomal subunit; part of the 5S rRNA/L5/L18/L25 subcomplex. Contacts the 5S and 23S rRNAs.</text>
</comment>
<comment type="similarity">
    <text evidence="1">Belongs to the universal ribosomal protein uL18 family.</text>
</comment>
<feature type="chain" id="PRO_0000251350" description="Large ribosomal subunit protein uL18">
    <location>
        <begin position="1"/>
        <end position="116"/>
    </location>
</feature>
<evidence type="ECO:0000255" key="1">
    <source>
        <dbReference type="HAMAP-Rule" id="MF_01337"/>
    </source>
</evidence>
<evidence type="ECO:0000305" key="2"/>